<dbReference type="EMBL" id="J00400">
    <property type="protein sequence ID" value="AAA39648.1"/>
    <property type="molecule type" value="mRNA"/>
</dbReference>
<dbReference type="EMBL" id="U47328">
    <property type="protein sequence ID" value="AAB17606.1"/>
    <property type="molecule type" value="mRNA"/>
</dbReference>
<dbReference type="EMBL" id="V00746">
    <property type="protein sequence ID" value="CAA24119.2"/>
    <property type="molecule type" value="Genomic_DNA"/>
</dbReference>
<dbReference type="EMBL" id="V00747">
    <property type="protein sequence ID" value="CAA24119.2"/>
    <property type="status" value="JOINED"/>
    <property type="molecule type" value="Genomic_DNA"/>
</dbReference>
<dbReference type="CCDS" id="CCDS50069.1"/>
<dbReference type="PIR" id="A90980">
    <property type="entry name" value="HLMSKB"/>
</dbReference>
<dbReference type="RefSeq" id="NP_001001892.2">
    <property type="nucleotide sequence ID" value="NM_001001892.3"/>
</dbReference>
<dbReference type="PDB" id="1BQH">
    <property type="method" value="X-ray"/>
    <property type="resolution" value="2.80 A"/>
    <property type="chains" value="A/D=22-295"/>
</dbReference>
<dbReference type="PDB" id="1FO0">
    <property type="method" value="X-ray"/>
    <property type="resolution" value="2.50 A"/>
    <property type="chains" value="H=22-296"/>
</dbReference>
<dbReference type="PDB" id="1FZJ">
    <property type="method" value="X-ray"/>
    <property type="resolution" value="1.90 A"/>
    <property type="chains" value="A=22-295"/>
</dbReference>
<dbReference type="PDB" id="1FZK">
    <property type="method" value="X-ray"/>
    <property type="resolution" value="1.70 A"/>
    <property type="chains" value="A=22-295"/>
</dbReference>
<dbReference type="PDB" id="1FZM">
    <property type="method" value="X-ray"/>
    <property type="resolution" value="1.80 A"/>
    <property type="chains" value="A=22-295"/>
</dbReference>
<dbReference type="PDB" id="1FZO">
    <property type="method" value="X-ray"/>
    <property type="resolution" value="1.80 A"/>
    <property type="chains" value="A=22-295"/>
</dbReference>
<dbReference type="PDB" id="1G6R">
    <property type="method" value="X-ray"/>
    <property type="resolution" value="2.80 A"/>
    <property type="chains" value="H/I=22-295"/>
</dbReference>
<dbReference type="PDB" id="1G7P">
    <property type="method" value="X-ray"/>
    <property type="resolution" value="1.50 A"/>
    <property type="chains" value="A=22-295"/>
</dbReference>
<dbReference type="PDB" id="1G7Q">
    <property type="method" value="X-ray"/>
    <property type="resolution" value="1.60 A"/>
    <property type="chains" value="A=22-295"/>
</dbReference>
<dbReference type="PDB" id="1KBG">
    <property type="method" value="X-ray"/>
    <property type="resolution" value="2.20 A"/>
    <property type="chains" value="H=22-295"/>
</dbReference>
<dbReference type="PDB" id="1KJ2">
    <property type="method" value="X-ray"/>
    <property type="resolution" value="2.71 A"/>
    <property type="chains" value="H/I=22-298"/>
</dbReference>
<dbReference type="PDB" id="1KJ3">
    <property type="method" value="X-ray"/>
    <property type="resolution" value="2.30 A"/>
    <property type="chains" value="H/I=22-299"/>
</dbReference>
<dbReference type="PDB" id="1KPU">
    <property type="method" value="X-ray"/>
    <property type="resolution" value="1.50 A"/>
    <property type="chains" value="A=22-295"/>
</dbReference>
<dbReference type="PDB" id="1KPV">
    <property type="method" value="X-ray"/>
    <property type="resolution" value="1.71 A"/>
    <property type="chains" value="A=22-295"/>
</dbReference>
<dbReference type="PDB" id="1LEG">
    <property type="method" value="X-ray"/>
    <property type="resolution" value="1.75 A"/>
    <property type="chains" value="A=22-295"/>
</dbReference>
<dbReference type="PDB" id="1LEK">
    <property type="method" value="X-ray"/>
    <property type="resolution" value="2.15 A"/>
    <property type="chains" value="A=22-295"/>
</dbReference>
<dbReference type="PDB" id="1LK2">
    <property type="method" value="X-ray"/>
    <property type="resolution" value="1.35 A"/>
    <property type="chains" value="A=22-295"/>
</dbReference>
<dbReference type="PDB" id="1MWA">
    <property type="method" value="X-ray"/>
    <property type="resolution" value="2.40 A"/>
    <property type="chains" value="H/I=22-295"/>
</dbReference>
<dbReference type="PDB" id="1N59">
    <property type="method" value="X-ray"/>
    <property type="resolution" value="2.95 A"/>
    <property type="chains" value="A/C=22-297"/>
</dbReference>
<dbReference type="PDB" id="1NAM">
    <property type="method" value="X-ray"/>
    <property type="resolution" value="2.70 A"/>
    <property type="chains" value="H=22-296"/>
</dbReference>
<dbReference type="PDB" id="1NAN">
    <property type="method" value="X-ray"/>
    <property type="resolution" value="2.30 A"/>
    <property type="chains" value="H/L=22-299"/>
</dbReference>
<dbReference type="PDB" id="1OSZ">
    <property type="method" value="X-ray"/>
    <property type="resolution" value="2.10 A"/>
    <property type="chains" value="A=22-295"/>
</dbReference>
<dbReference type="PDB" id="1P1Z">
    <property type="method" value="X-ray"/>
    <property type="resolution" value="3.26 A"/>
    <property type="chains" value="A=22-295"/>
</dbReference>
<dbReference type="PDB" id="1P4L">
    <property type="method" value="X-ray"/>
    <property type="resolution" value="2.90 A"/>
    <property type="chains" value="A=22-295"/>
</dbReference>
<dbReference type="PDB" id="1RJY">
    <property type="method" value="X-ray"/>
    <property type="resolution" value="1.90 A"/>
    <property type="chains" value="A/D=22-301"/>
</dbReference>
<dbReference type="PDB" id="1RJZ">
    <property type="method" value="X-ray"/>
    <property type="resolution" value="2.60 A"/>
    <property type="chains" value="A/D=22-301"/>
</dbReference>
<dbReference type="PDB" id="1RK0">
    <property type="method" value="X-ray"/>
    <property type="resolution" value="2.61 A"/>
    <property type="chains" value="A=22-295"/>
</dbReference>
<dbReference type="PDB" id="1RK1">
    <property type="method" value="X-ray"/>
    <property type="resolution" value="2.10 A"/>
    <property type="chains" value="A=22-295"/>
</dbReference>
<dbReference type="PDB" id="1S7Q">
    <property type="method" value="X-ray"/>
    <property type="resolution" value="1.99 A"/>
    <property type="chains" value="A=22-369"/>
</dbReference>
<dbReference type="PDB" id="1S7R">
    <property type="method" value="X-ray"/>
    <property type="resolution" value="2.95 A"/>
    <property type="chains" value="A/D=22-369"/>
</dbReference>
<dbReference type="PDB" id="1S7S">
    <property type="method" value="X-ray"/>
    <property type="resolution" value="1.99 A"/>
    <property type="chains" value="A=22-369"/>
</dbReference>
<dbReference type="PDB" id="1S7T">
    <property type="method" value="X-ray"/>
    <property type="resolution" value="2.30 A"/>
    <property type="chains" value="A/D=22-369"/>
</dbReference>
<dbReference type="PDB" id="1T0M">
    <property type="method" value="X-ray"/>
    <property type="resolution" value="2.00 A"/>
    <property type="chains" value="A/D=22-299"/>
</dbReference>
<dbReference type="PDB" id="1T0N">
    <property type="method" value="X-ray"/>
    <property type="resolution" value="1.80 A"/>
    <property type="chains" value="A/D=22-299"/>
</dbReference>
<dbReference type="PDB" id="1VAC">
    <property type="method" value="X-ray"/>
    <property type="resolution" value="2.50 A"/>
    <property type="chains" value="A=22-295"/>
</dbReference>
<dbReference type="PDB" id="1VAD">
    <property type="method" value="X-ray"/>
    <property type="resolution" value="2.50 A"/>
    <property type="chains" value="A=22-295"/>
</dbReference>
<dbReference type="PDB" id="1WBZ">
    <property type="method" value="X-ray"/>
    <property type="resolution" value="2.00 A"/>
    <property type="chains" value="A/C=22-296"/>
</dbReference>
<dbReference type="PDB" id="2CKB">
    <property type="method" value="X-ray"/>
    <property type="resolution" value="3.00 A"/>
    <property type="chains" value="H/I=22-295"/>
</dbReference>
<dbReference type="PDB" id="2CLV">
    <property type="method" value="X-ray"/>
    <property type="resolution" value="1.90 A"/>
    <property type="chains" value="A/H=22-300"/>
</dbReference>
<dbReference type="PDB" id="2CLZ">
    <property type="method" value="X-ray"/>
    <property type="resolution" value="1.90 A"/>
    <property type="chains" value="A/H=22-300"/>
</dbReference>
<dbReference type="PDB" id="2FO4">
    <property type="method" value="X-ray"/>
    <property type="resolution" value="2.70 A"/>
    <property type="chains" value="A=22-295"/>
</dbReference>
<dbReference type="PDB" id="2MHA">
    <property type="method" value="X-ray"/>
    <property type="resolution" value="2.50 A"/>
    <property type="chains" value="A/C=22-291"/>
</dbReference>
<dbReference type="PDB" id="2OL3">
    <property type="method" value="X-ray"/>
    <property type="resolution" value="2.90 A"/>
    <property type="chains" value="H=22-300"/>
</dbReference>
<dbReference type="PDB" id="2QRI">
    <property type="method" value="X-ray"/>
    <property type="resolution" value="2.00 A"/>
    <property type="chains" value="A/B=22-301"/>
</dbReference>
<dbReference type="PDB" id="2QRS">
    <property type="method" value="X-ray"/>
    <property type="resolution" value="2.00 A"/>
    <property type="chains" value="A/B=22-301"/>
</dbReference>
<dbReference type="PDB" id="2QRT">
    <property type="method" value="X-ray"/>
    <property type="resolution" value="1.80 A"/>
    <property type="chains" value="A/B=22-301"/>
</dbReference>
<dbReference type="PDB" id="2VAA">
    <property type="method" value="X-ray"/>
    <property type="resolution" value="2.30 A"/>
    <property type="chains" value="A=22-295"/>
</dbReference>
<dbReference type="PDB" id="2VAB">
    <property type="method" value="X-ray"/>
    <property type="resolution" value="2.50 A"/>
    <property type="chains" value="A=22-295"/>
</dbReference>
<dbReference type="PDB" id="2ZSV">
    <property type="method" value="X-ray"/>
    <property type="resolution" value="1.80 A"/>
    <property type="chains" value="A/C=22-299"/>
</dbReference>
<dbReference type="PDB" id="2ZSW">
    <property type="method" value="X-ray"/>
    <property type="resolution" value="2.80 A"/>
    <property type="chains" value="A/C/E/G=22-299"/>
</dbReference>
<dbReference type="PDB" id="3C8K">
    <property type="method" value="X-ray"/>
    <property type="resolution" value="2.90 A"/>
    <property type="chains" value="A=22-295"/>
</dbReference>
<dbReference type="PDB" id="3CVH">
    <property type="method" value="X-ray"/>
    <property type="resolution" value="2.90 A"/>
    <property type="chains" value="A/M=22-295"/>
</dbReference>
<dbReference type="PDB" id="3P4M">
    <property type="method" value="X-ray"/>
    <property type="resolution" value="2.50 A"/>
    <property type="chains" value="A/D=22-298"/>
</dbReference>
<dbReference type="PDB" id="3P4N">
    <property type="method" value="X-ray"/>
    <property type="resolution" value="2.50 A"/>
    <property type="chains" value="A/D=22-298"/>
</dbReference>
<dbReference type="PDB" id="3P4O">
    <property type="method" value="X-ray"/>
    <property type="resolution" value="2.30 A"/>
    <property type="chains" value="A/D=22-298"/>
</dbReference>
<dbReference type="PDB" id="3P9L">
    <property type="method" value="X-ray"/>
    <property type="resolution" value="2.00 A"/>
    <property type="chains" value="A/D=22-299"/>
</dbReference>
<dbReference type="PDB" id="3P9M">
    <property type="method" value="X-ray"/>
    <property type="resolution" value="2.00 A"/>
    <property type="chains" value="A/D=22-298"/>
</dbReference>
<dbReference type="PDB" id="3PAB">
    <property type="method" value="X-ray"/>
    <property type="resolution" value="2.20 A"/>
    <property type="chains" value="A/D=22-299"/>
</dbReference>
<dbReference type="PDB" id="3RGV">
    <property type="method" value="X-ray"/>
    <property type="resolution" value="2.90 A"/>
    <property type="chains" value="C=22-296"/>
</dbReference>
<dbReference type="PDB" id="3ROL">
    <property type="method" value="X-ray"/>
    <property type="resolution" value="2.60 A"/>
    <property type="chains" value="A/C=22-296"/>
</dbReference>
<dbReference type="PDB" id="3ROO">
    <property type="method" value="X-ray"/>
    <property type="resolution" value="2.00 A"/>
    <property type="chains" value="A/C=22-296"/>
</dbReference>
<dbReference type="PDB" id="3TID">
    <property type="method" value="X-ray"/>
    <property type="resolution" value="1.65 A"/>
    <property type="chains" value="A=22-297"/>
</dbReference>
<dbReference type="PDB" id="3TIE">
    <property type="method" value="X-ray"/>
    <property type="resolution" value="2.25 A"/>
    <property type="chains" value="A/D=22-297"/>
</dbReference>
<dbReference type="PDB" id="4HKJ">
    <property type="method" value="X-ray"/>
    <property type="resolution" value="3.00 A"/>
    <property type="chains" value="A/E/I/M=22-301"/>
</dbReference>
<dbReference type="PDB" id="4HS3">
    <property type="method" value="X-ray"/>
    <property type="resolution" value="2.10 A"/>
    <property type="chains" value="A=22-297"/>
</dbReference>
<dbReference type="PDB" id="4PG9">
    <property type="method" value="X-ray"/>
    <property type="resolution" value="2.40 A"/>
    <property type="chains" value="A=22-299"/>
</dbReference>
<dbReference type="PDB" id="4PGB">
    <property type="method" value="X-ray"/>
    <property type="resolution" value="2.80 A"/>
    <property type="chains" value="A/D=22-299"/>
</dbReference>
<dbReference type="PDB" id="4PGC">
    <property type="method" value="X-ray"/>
    <property type="resolution" value="2.30 A"/>
    <property type="chains" value="A/D=22-299"/>
</dbReference>
<dbReference type="PDB" id="4PGD">
    <property type="method" value="X-ray"/>
    <property type="resolution" value="2.70 A"/>
    <property type="chains" value="A=22-299"/>
</dbReference>
<dbReference type="PDB" id="4PGE">
    <property type="method" value="X-ray"/>
    <property type="resolution" value="2.00 A"/>
    <property type="chains" value="A=22-299"/>
</dbReference>
<dbReference type="PDB" id="4PV8">
    <property type="method" value="X-ray"/>
    <property type="resolution" value="2.31 A"/>
    <property type="chains" value="A/C=22-299"/>
</dbReference>
<dbReference type="PDB" id="4PV9">
    <property type="method" value="X-ray"/>
    <property type="resolution" value="2.00 A"/>
    <property type="chains" value="A/C=22-299"/>
</dbReference>
<dbReference type="PDB" id="5OQF">
    <property type="method" value="X-ray"/>
    <property type="resolution" value="2.27 A"/>
    <property type="chains" value="A/B=23-304"/>
</dbReference>
<dbReference type="PDB" id="5OQG">
    <property type="method" value="X-ray"/>
    <property type="resolution" value="1.90 A"/>
    <property type="chains" value="A/B=22-304"/>
</dbReference>
<dbReference type="PDB" id="5OQH">
    <property type="method" value="X-ray"/>
    <property type="resolution" value="2.05 A"/>
    <property type="chains" value="A/B=22-304"/>
</dbReference>
<dbReference type="PDB" id="5OQI">
    <property type="method" value="X-ray"/>
    <property type="resolution" value="2.40 A"/>
    <property type="chains" value="A/B=22-304"/>
</dbReference>
<dbReference type="PDB" id="6GB6">
    <property type="method" value="X-ray"/>
    <property type="resolution" value="1.78 A"/>
    <property type="chains" value="A/D=22-297"/>
</dbReference>
<dbReference type="PDB" id="6JQ2">
    <property type="method" value="X-ray"/>
    <property type="resolution" value="2.40 A"/>
    <property type="chains" value="A=22-295"/>
</dbReference>
<dbReference type="PDB" id="6JQ3">
    <property type="method" value="X-ray"/>
    <property type="resolution" value="2.50 A"/>
    <property type="chains" value="A=22-295"/>
</dbReference>
<dbReference type="PDB" id="6WL2">
    <property type="method" value="X-ray"/>
    <property type="resolution" value="3.30 A"/>
    <property type="chains" value="A/D/G=22-206"/>
</dbReference>
<dbReference type="PDB" id="6WL3">
    <property type="method" value="X-ray"/>
    <property type="resolution" value="3.45 A"/>
    <property type="chains" value="A/D/G=22-206"/>
</dbReference>
<dbReference type="PDB" id="6WL4">
    <property type="method" value="X-ray"/>
    <property type="resolution" value="3.60 A"/>
    <property type="chains" value="A/D/G=22-206"/>
</dbReference>
<dbReference type="PDB" id="7JI2">
    <property type="method" value="X-ray"/>
    <property type="resolution" value="1.95 A"/>
    <property type="chains" value="A/D=22-301"/>
</dbReference>
<dbReference type="PDB" id="7WCY">
    <property type="method" value="X-ray"/>
    <property type="resolution" value="2.36 A"/>
    <property type="chains" value="A/D=22-296"/>
</dbReference>
<dbReference type="PDB" id="8JHV">
    <property type="method" value="X-ray"/>
    <property type="resolution" value="3.47 A"/>
    <property type="chains" value="A/D=22-296"/>
</dbReference>
<dbReference type="PDB" id="8JHW">
    <property type="method" value="X-ray"/>
    <property type="resolution" value="3.12 A"/>
    <property type="chains" value="A=22-296"/>
</dbReference>
<dbReference type="PDBsum" id="1BQH"/>
<dbReference type="PDBsum" id="1FO0"/>
<dbReference type="PDBsum" id="1FZJ"/>
<dbReference type="PDBsum" id="1FZK"/>
<dbReference type="PDBsum" id="1FZM"/>
<dbReference type="PDBsum" id="1FZO"/>
<dbReference type="PDBsum" id="1G6R"/>
<dbReference type="PDBsum" id="1G7P"/>
<dbReference type="PDBsum" id="1G7Q"/>
<dbReference type="PDBsum" id="1KBG"/>
<dbReference type="PDBsum" id="1KJ2"/>
<dbReference type="PDBsum" id="1KJ3"/>
<dbReference type="PDBsum" id="1KPU"/>
<dbReference type="PDBsum" id="1KPV"/>
<dbReference type="PDBsum" id="1LEG"/>
<dbReference type="PDBsum" id="1LEK"/>
<dbReference type="PDBsum" id="1LK2"/>
<dbReference type="PDBsum" id="1MWA"/>
<dbReference type="PDBsum" id="1N59"/>
<dbReference type="PDBsum" id="1NAM"/>
<dbReference type="PDBsum" id="1NAN"/>
<dbReference type="PDBsum" id="1OSZ"/>
<dbReference type="PDBsum" id="1P1Z"/>
<dbReference type="PDBsum" id="1P4L"/>
<dbReference type="PDBsum" id="1RJY"/>
<dbReference type="PDBsum" id="1RJZ"/>
<dbReference type="PDBsum" id="1RK0"/>
<dbReference type="PDBsum" id="1RK1"/>
<dbReference type="PDBsum" id="1S7Q"/>
<dbReference type="PDBsum" id="1S7R"/>
<dbReference type="PDBsum" id="1S7S"/>
<dbReference type="PDBsum" id="1S7T"/>
<dbReference type="PDBsum" id="1T0M"/>
<dbReference type="PDBsum" id="1T0N"/>
<dbReference type="PDBsum" id="1VAC"/>
<dbReference type="PDBsum" id="1VAD"/>
<dbReference type="PDBsum" id="1WBZ"/>
<dbReference type="PDBsum" id="2CKB"/>
<dbReference type="PDBsum" id="2CLV"/>
<dbReference type="PDBsum" id="2CLZ"/>
<dbReference type="PDBsum" id="2FO4"/>
<dbReference type="PDBsum" id="2MHA"/>
<dbReference type="PDBsum" id="2OL3"/>
<dbReference type="PDBsum" id="2QRI"/>
<dbReference type="PDBsum" id="2QRS"/>
<dbReference type="PDBsum" id="2QRT"/>
<dbReference type="PDBsum" id="2VAA"/>
<dbReference type="PDBsum" id="2VAB"/>
<dbReference type="PDBsum" id="2ZSV"/>
<dbReference type="PDBsum" id="2ZSW"/>
<dbReference type="PDBsum" id="3C8K"/>
<dbReference type="PDBsum" id="3CVH"/>
<dbReference type="PDBsum" id="3P4M"/>
<dbReference type="PDBsum" id="3P4N"/>
<dbReference type="PDBsum" id="3P4O"/>
<dbReference type="PDBsum" id="3P9L"/>
<dbReference type="PDBsum" id="3P9M"/>
<dbReference type="PDBsum" id="3PAB"/>
<dbReference type="PDBsum" id="3RGV"/>
<dbReference type="PDBsum" id="3ROL"/>
<dbReference type="PDBsum" id="3ROO"/>
<dbReference type="PDBsum" id="3TID"/>
<dbReference type="PDBsum" id="3TIE"/>
<dbReference type="PDBsum" id="4HKJ"/>
<dbReference type="PDBsum" id="4HS3"/>
<dbReference type="PDBsum" id="4PG9"/>
<dbReference type="PDBsum" id="4PGB"/>
<dbReference type="PDBsum" id="4PGC"/>
<dbReference type="PDBsum" id="4PGD"/>
<dbReference type="PDBsum" id="4PGE"/>
<dbReference type="PDBsum" id="4PV8"/>
<dbReference type="PDBsum" id="4PV9"/>
<dbReference type="PDBsum" id="5OQF"/>
<dbReference type="PDBsum" id="5OQG"/>
<dbReference type="PDBsum" id="5OQH"/>
<dbReference type="PDBsum" id="5OQI"/>
<dbReference type="PDBsum" id="6GB6"/>
<dbReference type="PDBsum" id="6JQ2"/>
<dbReference type="PDBsum" id="6JQ3"/>
<dbReference type="PDBsum" id="6WL2"/>
<dbReference type="PDBsum" id="6WL3"/>
<dbReference type="PDBsum" id="6WL4"/>
<dbReference type="PDBsum" id="7JI2"/>
<dbReference type="PDBsum" id="7WCY"/>
<dbReference type="PDBsum" id="8JHV"/>
<dbReference type="PDBsum" id="8JHW"/>
<dbReference type="SMR" id="P01901"/>
<dbReference type="BioGRID" id="200155">
    <property type="interactions" value="5"/>
</dbReference>
<dbReference type="DIP" id="DIP-6189N"/>
<dbReference type="FunCoup" id="P01901">
    <property type="interactions" value="860"/>
</dbReference>
<dbReference type="IntAct" id="P01901">
    <property type="interactions" value="4"/>
</dbReference>
<dbReference type="MINT" id="P01901"/>
<dbReference type="STRING" id="10090.ENSMUSP00000025181"/>
<dbReference type="GlyCosmos" id="P01901">
    <property type="glycosylation" value="2 sites, No reported glycans"/>
</dbReference>
<dbReference type="GlyGen" id="P01901">
    <property type="glycosylation" value="4 sites, 2 N-linked glycans (2 sites), 1 O-linked glycan (1 site)"/>
</dbReference>
<dbReference type="iPTMnet" id="P01901"/>
<dbReference type="PhosphoSitePlus" id="P01901"/>
<dbReference type="SwissPalm" id="P01901"/>
<dbReference type="jPOST" id="P01901"/>
<dbReference type="PaxDb" id="10090-ENSMUSP00000025181"/>
<dbReference type="PeptideAtlas" id="P01901"/>
<dbReference type="ProteomicsDB" id="269800"/>
<dbReference type="Pumba" id="P01901"/>
<dbReference type="ABCD" id="P01901">
    <property type="antibodies" value="1 sequenced antibody"/>
</dbReference>
<dbReference type="DNASU" id="14972"/>
<dbReference type="Ensembl" id="ENSMUST00000025181.18">
    <property type="protein sequence ID" value="ENSMUSP00000025181.11"/>
    <property type="gene ID" value="ENSMUSG00000061232.17"/>
</dbReference>
<dbReference type="GeneID" id="14972"/>
<dbReference type="KEGG" id="mmu:14972"/>
<dbReference type="UCSC" id="uc008cap.1">
    <property type="organism name" value="mouse"/>
</dbReference>
<dbReference type="AGR" id="MGI:95904"/>
<dbReference type="CTD" id="14972"/>
<dbReference type="MGI" id="MGI:95904">
    <property type="gene designation" value="H2-K1"/>
</dbReference>
<dbReference type="VEuPathDB" id="HostDB:ENSMUSG00000061232"/>
<dbReference type="eggNOG" id="ENOG502RQEK">
    <property type="taxonomic scope" value="Eukaryota"/>
</dbReference>
<dbReference type="GeneTree" id="ENSGT01120000271826"/>
<dbReference type="InParanoid" id="P01901"/>
<dbReference type="OMA" id="PETERWI"/>
<dbReference type="OrthoDB" id="8936120at2759"/>
<dbReference type="PhylomeDB" id="P01901"/>
<dbReference type="TreeFam" id="TF336617"/>
<dbReference type="Reactome" id="R-MMU-1236974">
    <property type="pathway name" value="ER-Phagosome pathway"/>
</dbReference>
<dbReference type="Reactome" id="R-MMU-1236977">
    <property type="pathway name" value="Endosomal/Vacuolar pathway"/>
</dbReference>
<dbReference type="Reactome" id="R-MMU-198933">
    <property type="pathway name" value="Immunoregulatory interactions between a Lymphoid and a non-Lymphoid cell"/>
</dbReference>
<dbReference type="Reactome" id="R-MMU-2172127">
    <property type="pathway name" value="DAP12 interactions"/>
</dbReference>
<dbReference type="Reactome" id="R-MMU-6798695">
    <property type="pathway name" value="Neutrophil degranulation"/>
</dbReference>
<dbReference type="Reactome" id="R-MMU-983170">
    <property type="pathway name" value="Antigen Presentation: Folding, assembly and peptide loading of class I MHC"/>
</dbReference>
<dbReference type="BioGRID-ORCS" id="14972">
    <property type="hits" value="12 hits in 67 CRISPR screens"/>
</dbReference>
<dbReference type="ChiTaRS" id="H2-K1">
    <property type="organism name" value="mouse"/>
</dbReference>
<dbReference type="EvolutionaryTrace" id="P01901"/>
<dbReference type="Proteomes" id="UP000000589">
    <property type="component" value="Chromosome 17"/>
</dbReference>
<dbReference type="RNAct" id="P01901">
    <property type="molecule type" value="protein"/>
</dbReference>
<dbReference type="Bgee" id="ENSMUSG00000061232">
    <property type="expression patterns" value="Expressed in thoracic mammary gland and 235 other cell types or tissues"/>
</dbReference>
<dbReference type="ExpressionAtlas" id="P01901">
    <property type="expression patterns" value="baseline and differential"/>
</dbReference>
<dbReference type="GO" id="GO:0009897">
    <property type="term" value="C:external side of plasma membrane"/>
    <property type="evidence" value="ECO:0000314"/>
    <property type="project" value="MGI"/>
</dbReference>
<dbReference type="GO" id="GO:0098553">
    <property type="term" value="C:lumenal side of endoplasmic reticulum membrane"/>
    <property type="evidence" value="ECO:0000304"/>
    <property type="project" value="Reactome"/>
</dbReference>
<dbReference type="GO" id="GO:0042612">
    <property type="term" value="C:MHC class I protein complex"/>
    <property type="evidence" value="ECO:0007669"/>
    <property type="project" value="UniProtKB-KW"/>
</dbReference>
<dbReference type="GO" id="GO:0030670">
    <property type="term" value="C:phagocytic vesicle membrane"/>
    <property type="evidence" value="ECO:0000304"/>
    <property type="project" value="Reactome"/>
</dbReference>
<dbReference type="GO" id="GO:0042605">
    <property type="term" value="F:peptide antigen binding"/>
    <property type="evidence" value="ECO:0000314"/>
    <property type="project" value="MGI"/>
</dbReference>
<dbReference type="GO" id="GO:0002485">
    <property type="term" value="P:antigen processing and presentation of endogenous peptide antigen via MHC class I via ER pathway, TAP-dependent"/>
    <property type="evidence" value="ECO:0000314"/>
    <property type="project" value="MGI"/>
</dbReference>
<dbReference type="GO" id="GO:0042590">
    <property type="term" value="P:antigen processing and presentation of exogenous peptide antigen via MHC class I"/>
    <property type="evidence" value="ECO:0000314"/>
    <property type="project" value="MGI"/>
</dbReference>
<dbReference type="GO" id="GO:0042742">
    <property type="term" value="P:defense response to bacterium"/>
    <property type="evidence" value="ECO:0000314"/>
    <property type="project" value="MGI"/>
</dbReference>
<dbReference type="GO" id="GO:0048839">
    <property type="term" value="P:inner ear development"/>
    <property type="evidence" value="ECO:0000314"/>
    <property type="project" value="MGI"/>
</dbReference>
<dbReference type="GO" id="GO:0010977">
    <property type="term" value="P:negative regulation of neuron projection development"/>
    <property type="evidence" value="ECO:0000314"/>
    <property type="project" value="MGI"/>
</dbReference>
<dbReference type="GO" id="GO:0001916">
    <property type="term" value="P:positive regulation of T cell mediated cytotoxicity"/>
    <property type="evidence" value="ECO:0000314"/>
    <property type="project" value="MGI"/>
</dbReference>
<dbReference type="GO" id="GO:0001913">
    <property type="term" value="P:T cell mediated cytotoxicity"/>
    <property type="evidence" value="ECO:0000314"/>
    <property type="project" value="MGI"/>
</dbReference>
<dbReference type="CDD" id="cd21019">
    <property type="entry name" value="IgC1_MHC_Ia_H-2Kb"/>
    <property type="match status" value="1"/>
</dbReference>
<dbReference type="FunFam" id="2.60.40.10:FF:000014">
    <property type="entry name" value="H-2 class I histocompatibility antigen, alpha chain"/>
    <property type="match status" value="1"/>
</dbReference>
<dbReference type="FunFam" id="3.30.500.10:FF:000001">
    <property type="entry name" value="H-2 class I histocompatibility antigen, alpha chain"/>
    <property type="match status" value="1"/>
</dbReference>
<dbReference type="Gene3D" id="2.60.40.10">
    <property type="entry name" value="Immunoglobulins"/>
    <property type="match status" value="1"/>
</dbReference>
<dbReference type="Gene3D" id="3.30.500.10">
    <property type="entry name" value="MHC class I-like antigen recognition-like"/>
    <property type="match status" value="1"/>
</dbReference>
<dbReference type="InterPro" id="IPR007110">
    <property type="entry name" value="Ig-like_dom"/>
</dbReference>
<dbReference type="InterPro" id="IPR036179">
    <property type="entry name" value="Ig-like_dom_sf"/>
</dbReference>
<dbReference type="InterPro" id="IPR013783">
    <property type="entry name" value="Ig-like_fold"/>
</dbReference>
<dbReference type="InterPro" id="IPR003006">
    <property type="entry name" value="Ig/MHC_CS"/>
</dbReference>
<dbReference type="InterPro" id="IPR003597">
    <property type="entry name" value="Ig_C1-set"/>
</dbReference>
<dbReference type="InterPro" id="IPR050208">
    <property type="entry name" value="MHC_class-I_related"/>
</dbReference>
<dbReference type="InterPro" id="IPR011161">
    <property type="entry name" value="MHC_I-like_Ag-recog"/>
</dbReference>
<dbReference type="InterPro" id="IPR037055">
    <property type="entry name" value="MHC_I-like_Ag-recog_sf"/>
</dbReference>
<dbReference type="InterPro" id="IPR011162">
    <property type="entry name" value="MHC_I/II-like_Ag-recog"/>
</dbReference>
<dbReference type="InterPro" id="IPR001039">
    <property type="entry name" value="MHC_I_a_a1/a2"/>
</dbReference>
<dbReference type="InterPro" id="IPR010579">
    <property type="entry name" value="MHC_I_a_C"/>
</dbReference>
<dbReference type="PANTHER" id="PTHR16675:SF251">
    <property type="entry name" value="HLA CLASS I HISTOCOMPATIBILITY ANTIGEN, C ALPHA CHAIN"/>
    <property type="match status" value="1"/>
</dbReference>
<dbReference type="PANTHER" id="PTHR16675">
    <property type="entry name" value="MHC CLASS I-RELATED"/>
    <property type="match status" value="1"/>
</dbReference>
<dbReference type="Pfam" id="PF07654">
    <property type="entry name" value="C1-set"/>
    <property type="match status" value="1"/>
</dbReference>
<dbReference type="Pfam" id="PF00129">
    <property type="entry name" value="MHC_I"/>
    <property type="match status" value="1"/>
</dbReference>
<dbReference type="Pfam" id="PF06623">
    <property type="entry name" value="MHC_I_C"/>
    <property type="match status" value="1"/>
</dbReference>
<dbReference type="PRINTS" id="PR01638">
    <property type="entry name" value="MHCCLASSI"/>
</dbReference>
<dbReference type="SMART" id="SM00407">
    <property type="entry name" value="IGc1"/>
    <property type="match status" value="1"/>
</dbReference>
<dbReference type="SUPFAM" id="SSF48726">
    <property type="entry name" value="Immunoglobulin"/>
    <property type="match status" value="1"/>
</dbReference>
<dbReference type="SUPFAM" id="SSF54452">
    <property type="entry name" value="MHC antigen-recognition domain"/>
    <property type="match status" value="1"/>
</dbReference>
<dbReference type="PROSITE" id="PS50835">
    <property type="entry name" value="IG_LIKE"/>
    <property type="match status" value="1"/>
</dbReference>
<dbReference type="PROSITE" id="PS00290">
    <property type="entry name" value="IG_MHC"/>
    <property type="match status" value="1"/>
</dbReference>
<protein>
    <recommendedName>
        <fullName>H-2 class I histocompatibility antigen, K-B alpha chain</fullName>
        <shortName>H-2K(B)</shortName>
    </recommendedName>
</protein>
<accession>P01901</accession>
<organism>
    <name type="scientific">Mus musculus</name>
    <name type="common">Mouse</name>
    <dbReference type="NCBI Taxonomy" id="10090"/>
    <lineage>
        <taxon>Eukaryota</taxon>
        <taxon>Metazoa</taxon>
        <taxon>Chordata</taxon>
        <taxon>Craniata</taxon>
        <taxon>Vertebrata</taxon>
        <taxon>Euteleostomi</taxon>
        <taxon>Mammalia</taxon>
        <taxon>Eutheria</taxon>
        <taxon>Euarchontoglires</taxon>
        <taxon>Glires</taxon>
        <taxon>Rodentia</taxon>
        <taxon>Myomorpha</taxon>
        <taxon>Muroidea</taxon>
        <taxon>Muridae</taxon>
        <taxon>Murinae</taxon>
        <taxon>Mus</taxon>
        <taxon>Mus</taxon>
    </lineage>
</organism>
<comment type="function">
    <text>Involved in the presentation of foreign antigens to the immune system.</text>
</comment>
<comment type="subunit">
    <text evidence="5">Heterodimer of an alpha chain and a beta chain (beta-2-microglobulin).</text>
</comment>
<comment type="interaction">
    <interactant intactId="EBI-1265227">
        <id>P01901</id>
    </interactant>
    <interactant intactId="EBI-771815">
        <id>P16879</id>
        <label>Fes</label>
    </interactant>
    <organismsDiffer>false</organismsDiffer>
    <experiments>3</experiments>
</comment>
<comment type="subcellular location">
    <subcellularLocation>
        <location>Membrane</location>
        <topology>Single-pass type I membrane protein</topology>
    </subcellularLocation>
</comment>
<comment type="similarity">
    <text evidence="6">Belongs to the MHC class I family.</text>
</comment>
<name>HA1B_MOUSE</name>
<keyword id="KW-0002">3D-structure</keyword>
<keyword id="KW-0903">Direct protein sequencing</keyword>
<keyword id="KW-1015">Disulfide bond</keyword>
<keyword id="KW-0325">Glycoprotein</keyword>
<keyword id="KW-0391">Immunity</keyword>
<keyword id="KW-0472">Membrane</keyword>
<keyword id="KW-0490">MHC I</keyword>
<keyword id="KW-0597">Phosphoprotein</keyword>
<keyword id="KW-1185">Reference proteome</keyword>
<keyword id="KW-0732">Signal</keyword>
<keyword id="KW-0812">Transmembrane</keyword>
<keyword id="KW-1133">Transmembrane helix</keyword>
<gene>
    <name type="primary">H2-K1</name>
    <name type="synonym">H2-K</name>
</gene>
<evidence type="ECO:0000250" key="1">
    <source>
        <dbReference type="UniProtKB" id="P01900"/>
    </source>
</evidence>
<evidence type="ECO:0000255" key="2"/>
<evidence type="ECO:0000269" key="3">
    <source>
    </source>
</evidence>
<evidence type="ECO:0000269" key="4">
    <source>
    </source>
</evidence>
<evidence type="ECO:0000269" key="5">
    <source>
    </source>
</evidence>
<evidence type="ECO:0000305" key="6"/>
<evidence type="ECO:0007744" key="7">
    <source>
    </source>
</evidence>
<evidence type="ECO:0007744" key="8">
    <source>
    </source>
</evidence>
<evidence type="ECO:0007829" key="9">
    <source>
        <dbReference type="PDB" id="1G6R"/>
    </source>
</evidence>
<evidence type="ECO:0007829" key="10">
    <source>
        <dbReference type="PDB" id="1G7P"/>
    </source>
</evidence>
<evidence type="ECO:0007829" key="11">
    <source>
        <dbReference type="PDB" id="1LK2"/>
    </source>
</evidence>
<evidence type="ECO:0007829" key="12">
    <source>
        <dbReference type="PDB" id="1T0N"/>
    </source>
</evidence>
<evidence type="ECO:0007829" key="13">
    <source>
        <dbReference type="PDB" id="2MHA"/>
    </source>
</evidence>
<evidence type="ECO:0007829" key="14">
    <source>
        <dbReference type="PDB" id="3TID"/>
    </source>
</evidence>
<evidence type="ECO:0007829" key="15">
    <source>
        <dbReference type="PDB" id="6GB6"/>
    </source>
</evidence>
<proteinExistence type="evidence at protein level"/>
<reference key="1">
    <citation type="journal article" date="1983" name="EMBO J.">
        <title>The DNA sequence of the H-2K(b) gene: evidence for gene conversion as a mechanism for the generation of polymorphism in histocompatibility antigens.</title>
        <authorList>
            <person name="Weiss E."/>
            <person name="Golden L."/>
            <person name="Zakut R."/>
            <person name="Mellor A."/>
            <person name="Fahrner K."/>
            <person name="Kvist S."/>
            <person name="Flavell R.A."/>
        </authorList>
    </citation>
    <scope>NUCLEOTIDE SEQUENCE</scope>
</reference>
<reference key="2">
    <citation type="journal article" date="1996" name="Ann. Transplant.">
        <title>Nucleotide sequences of three H-2K and three H-2D complementary DNA clones coding mouse class I MHC heavy chain proteins.</title>
        <authorList>
            <person name="Wang M."/>
            <person name="Stepkowski S.M."/>
            <person name="Hebert J.S."/>
            <person name="Tian L."/>
            <person name="Yu J."/>
            <person name="Kahan B.D."/>
        </authorList>
    </citation>
    <scope>NUCLEOTIDE SEQUENCE [MRNA]</scope>
    <source>
        <strain>C57BL/10</strain>
    </source>
</reference>
<reference key="3">
    <citation type="journal article" date="1982" name="Proc. Natl. Acad. Sci. U.S.A.">
        <title>Isolation of a cDNA clone for the murine transplantation antigen H-2Kb.</title>
        <authorList>
            <person name="Reyes A.A."/>
            <person name="Schold M."/>
            <person name="Itakura K."/>
            <person name="Wallace R.B."/>
        </authorList>
    </citation>
    <scope>NUCLEOTIDE SEQUENCE [MRNA] OF 87-369</scope>
</reference>
<reference key="4">
    <citation type="journal article" date="1981" name="Biochemistry">
        <title>Amino acid sequence of the carboxyl-terminal hydrophilic region of the H-2Kb MHC alloantigen. Completion of the entire primary structure of the H-2Kb molecule.</title>
        <authorList>
            <person name="Uehara H."/>
            <person name="Coligan J.E."/>
            <person name="Nathenson S.G."/>
        </authorList>
    </citation>
    <scope>PROTEIN SEQUENCE OF 22-367</scope>
    <scope>GLYCOSYLATION AT ASN-107 AND ASN-197</scope>
</reference>
<reference key="5">
    <citation type="journal article" date="2007" name="Proc. Natl. Acad. Sci. U.S.A.">
        <title>Large-scale phosphorylation analysis of mouse liver.</title>
        <authorList>
            <person name="Villen J."/>
            <person name="Beausoleil S.A."/>
            <person name="Gerber S.A."/>
            <person name="Gygi S.P."/>
        </authorList>
    </citation>
    <scope>PHOSPHORYLATION [LARGE SCALE ANALYSIS] AT SER-354</scope>
    <scope>IDENTIFICATION BY MASS SPECTROMETRY [LARGE SCALE ANALYSIS]</scope>
    <source>
        <tissue>Liver</tissue>
    </source>
</reference>
<reference key="6">
    <citation type="journal article" date="2009" name="Nat. Biotechnol.">
        <title>Mass-spectrometric identification and relative quantification of N-linked cell surface glycoproteins.</title>
        <authorList>
            <person name="Wollscheid B."/>
            <person name="Bausch-Fluck D."/>
            <person name="Henderson C."/>
            <person name="O'Brien R."/>
            <person name="Bibel M."/>
            <person name="Schiess R."/>
            <person name="Aebersold R."/>
            <person name="Watts J.D."/>
        </authorList>
    </citation>
    <scope>GLYCOSYLATION [LARGE SCALE ANALYSIS] AT ASN-107</scope>
</reference>
<reference key="7">
    <citation type="journal article" date="2010" name="Cell">
        <title>A tissue-specific atlas of mouse protein phosphorylation and expression.</title>
        <authorList>
            <person name="Huttlin E.L."/>
            <person name="Jedrychowski M.P."/>
            <person name="Elias J.E."/>
            <person name="Goswami T."/>
            <person name="Rad R."/>
            <person name="Beausoleil S.A."/>
            <person name="Villen J."/>
            <person name="Haas W."/>
            <person name="Sowa M.E."/>
            <person name="Gygi S.P."/>
        </authorList>
    </citation>
    <scope>PHOSPHORYLATION [LARGE SCALE ANALYSIS] AT SER-354</scope>
    <scope>IDENTIFICATION BY MASS SPECTROMETRY [LARGE SCALE ANALYSIS]</scope>
    <source>
        <tissue>Brown adipose tissue</tissue>
        <tissue>Heart</tissue>
        <tissue>Kidney</tissue>
        <tissue>Liver</tissue>
        <tissue>Lung</tissue>
        <tissue>Pancreas</tissue>
        <tissue>Spleen</tissue>
        <tissue>Testis</tissue>
    </source>
</reference>
<reference key="8">
    <citation type="journal article" date="1992" name="Science">
        <title>Crystal structures of two viral peptides in complex with murine MHC class I H-2Kb.</title>
        <authorList>
            <person name="Fremont D.H."/>
            <person name="Matsumura M."/>
            <person name="Stura E.A."/>
            <person name="Peterson P.A."/>
            <person name="Wilson I.A."/>
        </authorList>
    </citation>
    <scope>X-RAY CRYSTALLOGRAPHY (2.3 ANGSTROMS) OF 22-295</scope>
</reference>
<reference key="9">
    <citation type="journal article" date="1998" name="Immunity">
        <title>Structural basis of CD8 coreceptor function revealed by crystallographic analysis of a murine CD8alphaalpha ectodomain fragment in complex with H-2Kb.</title>
        <authorList>
            <person name="Kern P.S."/>
            <person name="Teng M.K."/>
            <person name="Smolyar A."/>
            <person name="Liu J.H."/>
            <person name="Liu J."/>
            <person name="Hussey R.E."/>
            <person name="Spoerl R."/>
            <person name="Chang H.-C."/>
            <person name="Reinherz E.L."/>
            <person name="Wang J.-H."/>
        </authorList>
    </citation>
    <scope>X-RAY CRYSTALLOGRAPHY (2.8 ANGSTROMS) OF 22-295 IN COMPLEX WITH CD8A</scope>
</reference>
<reference key="10">
    <citation type="journal article" date="1999" name="Immunity">
        <title>Crystal structure of an MHC class I presented glycopeptide that generates carbohydrate-specific CTL.</title>
        <authorList>
            <person name="Speir J.A."/>
            <person name="Abdel-Motal U.M."/>
            <person name="Jondal M."/>
            <person name="Wilson I.A."/>
        </authorList>
    </citation>
    <scope>X-RAY CRYSTALLOGRAPHY (2.2 ANGSTROMS) OF 22-295</scope>
</reference>
<sequence>MVPCTLLLLLAAALAPTQTRAGPHSLRYFVTAVSRPGLGEPRYMEVGYVDDTEFVRFDSDAENPRYEPRARWMEQEGPEYWERETQKAKGNEQSFRVDLRTLLGYYNQSKGGSHTIQVISGCEVGSDGRLLRGYQQYAYDGCDYIALNEDLKTWTAADMAALITKHKWEQAGEAERLRAYLEGTCVEWLRRYLKNGNATLLRTDSPKAHVTHHSRPEDKVTLRCWALGFYPADITLTWQLNGEELIQDMELVETRPAGDGTFQKWASVVVPLGKEQYYTCHVYHQGLPEPLTLRWEPPPSTVSNMATVAVLVVLGAAIVTGAVVAFVMKMRRRNTGGKGGDYALAPGSQTSDLSLPDCKVMVHDPHSLA</sequence>
<feature type="signal peptide" evidence="4">
    <location>
        <begin position="1"/>
        <end position="21"/>
    </location>
</feature>
<feature type="chain" id="PRO_0000018928" description="H-2 class I histocompatibility antigen, K-B alpha chain">
    <location>
        <begin position="22"/>
        <end position="369"/>
    </location>
</feature>
<feature type="topological domain" description="Extracellular" evidence="2">
    <location>
        <begin position="22"/>
        <end position="305"/>
    </location>
</feature>
<feature type="transmembrane region" description="Helical" evidence="2">
    <location>
        <begin position="306"/>
        <end position="328"/>
    </location>
</feature>
<feature type="topological domain" description="Cytoplasmic" evidence="2">
    <location>
        <begin position="329"/>
        <end position="369"/>
    </location>
</feature>
<feature type="domain" description="Ig-like C1-type">
    <location>
        <begin position="206"/>
        <end position="294"/>
    </location>
</feature>
<feature type="region of interest" description="Alpha-1">
    <location>
        <begin position="22"/>
        <end position="111"/>
    </location>
</feature>
<feature type="region of interest" description="Alpha-2">
    <location>
        <begin position="112"/>
        <end position="203"/>
    </location>
</feature>
<feature type="region of interest" description="Alpha-3">
    <location>
        <begin position="204"/>
        <end position="295"/>
    </location>
</feature>
<feature type="region of interest" description="Connecting peptide">
    <location>
        <begin position="296"/>
        <end position="305"/>
    </location>
</feature>
<feature type="modified residue" description="Phosphoserine" evidence="1">
    <location>
        <position position="351"/>
    </location>
</feature>
<feature type="modified residue" description="Phosphoserine" evidence="7 8">
    <location>
        <position position="354"/>
    </location>
</feature>
<feature type="glycosylation site" description="N-linked (GlcNAc...) asparagine" evidence="3 4">
    <location>
        <position position="107"/>
    </location>
</feature>
<feature type="glycosylation site" description="N-linked (GlcNAc...) asparagine" evidence="4">
    <location>
        <position position="197"/>
    </location>
</feature>
<feature type="disulfide bond">
    <location>
        <begin position="122"/>
        <end position="185"/>
    </location>
</feature>
<feature type="disulfide bond">
    <location>
        <begin position="224"/>
        <end position="280"/>
    </location>
</feature>
<feature type="sequence conflict" description="In Ref. 4; AA sequence." evidence="6" ref="4">
    <original>E</original>
    <variation>D</variation>
    <location>
        <position position="217"/>
    </location>
</feature>
<feature type="sequence conflict" description="In Ref. 4; AA sequence." evidence="6" ref="4">
    <original>E</original>
    <variation>Q</variation>
    <location>
        <position position="289"/>
    </location>
</feature>
<feature type="sequence conflict" description="In Ref. 4; AA sequence." evidence="6" ref="4">
    <original>N</original>
    <variation>A</variation>
    <location>
        <position position="334"/>
    </location>
</feature>
<feature type="sequence conflict" description="In Ref. 4; AA sequence." evidence="6" ref="4">
    <original>D</original>
    <variation>P</variation>
    <location>
        <position position="364"/>
    </location>
</feature>
<feature type="strand" evidence="11">
    <location>
        <begin position="24"/>
        <end position="33"/>
    </location>
</feature>
<feature type="strand" evidence="11">
    <location>
        <begin position="38"/>
        <end position="40"/>
    </location>
</feature>
<feature type="strand" evidence="11">
    <location>
        <begin position="42"/>
        <end position="49"/>
    </location>
</feature>
<feature type="strand" evidence="11">
    <location>
        <begin position="52"/>
        <end position="58"/>
    </location>
</feature>
<feature type="strand" evidence="11">
    <location>
        <begin position="61"/>
        <end position="63"/>
    </location>
</feature>
<feature type="strand" evidence="14">
    <location>
        <begin position="67"/>
        <end position="70"/>
    </location>
</feature>
<feature type="helix" evidence="11">
    <location>
        <begin position="71"/>
        <end position="75"/>
    </location>
</feature>
<feature type="helix" evidence="11">
    <location>
        <begin position="78"/>
        <end position="105"/>
    </location>
</feature>
<feature type="strand" evidence="10">
    <location>
        <begin position="110"/>
        <end position="112"/>
    </location>
</feature>
<feature type="strand" evidence="11">
    <location>
        <begin position="115"/>
        <end position="124"/>
    </location>
</feature>
<feature type="strand" evidence="9">
    <location>
        <begin position="126"/>
        <end position="128"/>
    </location>
</feature>
<feature type="strand" evidence="11">
    <location>
        <begin position="130"/>
        <end position="139"/>
    </location>
</feature>
<feature type="strand" evidence="11">
    <location>
        <begin position="142"/>
        <end position="147"/>
    </location>
</feature>
<feature type="turn" evidence="13">
    <location>
        <begin position="149"/>
        <end position="152"/>
    </location>
</feature>
<feature type="strand" evidence="11">
    <location>
        <begin position="154"/>
        <end position="158"/>
    </location>
</feature>
<feature type="helix" evidence="11">
    <location>
        <begin position="159"/>
        <end position="171"/>
    </location>
</feature>
<feature type="helix" evidence="11">
    <location>
        <begin position="173"/>
        <end position="182"/>
    </location>
</feature>
<feature type="helix" evidence="11">
    <location>
        <begin position="184"/>
        <end position="195"/>
    </location>
</feature>
<feature type="helix" evidence="11">
    <location>
        <begin position="197"/>
        <end position="200"/>
    </location>
</feature>
<feature type="strand" evidence="11">
    <location>
        <begin position="207"/>
        <end position="214"/>
    </location>
</feature>
<feature type="strand" evidence="11">
    <location>
        <begin position="216"/>
        <end position="232"/>
    </location>
</feature>
<feature type="strand" evidence="11">
    <location>
        <begin position="235"/>
        <end position="240"/>
    </location>
</feature>
<feature type="strand" evidence="13">
    <location>
        <begin position="243"/>
        <end position="245"/>
    </location>
</feature>
<feature type="turn" evidence="11">
    <location>
        <begin position="246"/>
        <end position="248"/>
    </location>
</feature>
<feature type="strand" evidence="12">
    <location>
        <begin position="249"/>
        <end position="251"/>
    </location>
</feature>
<feature type="strand" evidence="11">
    <location>
        <begin position="258"/>
        <end position="260"/>
    </location>
</feature>
<feature type="strand" evidence="11">
    <location>
        <begin position="262"/>
        <end position="271"/>
    </location>
</feature>
<feature type="helix" evidence="11">
    <location>
        <begin position="275"/>
        <end position="277"/>
    </location>
</feature>
<feature type="strand" evidence="11">
    <location>
        <begin position="278"/>
        <end position="283"/>
    </location>
</feature>
<feature type="strand" evidence="15">
    <location>
        <begin position="287"/>
        <end position="289"/>
    </location>
</feature>
<feature type="strand" evidence="11">
    <location>
        <begin position="291"/>
        <end position="293"/>
    </location>
</feature>